<evidence type="ECO:0000255" key="1">
    <source>
        <dbReference type="HAMAP-Rule" id="MF_00818"/>
    </source>
</evidence>
<evidence type="ECO:0000256" key="2">
    <source>
        <dbReference type="SAM" id="MobiDB-lite"/>
    </source>
</evidence>
<name>QUEF_NITV4</name>
<organism>
    <name type="scientific">Nitratidesulfovibrio vulgaris (strain DP4)</name>
    <name type="common">Desulfovibrio vulgaris</name>
    <dbReference type="NCBI Taxonomy" id="391774"/>
    <lineage>
        <taxon>Bacteria</taxon>
        <taxon>Pseudomonadati</taxon>
        <taxon>Thermodesulfobacteriota</taxon>
        <taxon>Desulfovibrionia</taxon>
        <taxon>Desulfovibrionales</taxon>
        <taxon>Desulfovibrionaceae</taxon>
        <taxon>Nitratidesulfovibrio</taxon>
    </lineage>
</organism>
<protein>
    <recommendedName>
        <fullName evidence="1">NADPH-dependent 7-cyano-7-deazaguanine reductase</fullName>
        <ecNumber evidence="1">1.7.1.13</ecNumber>
    </recommendedName>
    <alternativeName>
        <fullName evidence="1">7-cyano-7-carbaguanine reductase</fullName>
    </alternativeName>
    <alternativeName>
        <fullName evidence="1">NADPH-dependent nitrile oxidoreductase</fullName>
    </alternativeName>
    <alternativeName>
        <fullName evidence="1">PreQ(0) reductase</fullName>
    </alternativeName>
</protein>
<dbReference type="EC" id="1.7.1.13" evidence="1"/>
<dbReference type="EMBL" id="CP000527">
    <property type="protein sequence ID" value="ABM29041.1"/>
    <property type="molecule type" value="Genomic_DNA"/>
</dbReference>
<dbReference type="RefSeq" id="WP_010938262.1">
    <property type="nucleotide sequence ID" value="NC_008751.1"/>
</dbReference>
<dbReference type="SMR" id="A1VF25"/>
<dbReference type="KEGG" id="dvl:Dvul_2025"/>
<dbReference type="HOGENOM" id="CLU_102489_0_1_7"/>
<dbReference type="UniPathway" id="UPA00392"/>
<dbReference type="Proteomes" id="UP000009173">
    <property type="component" value="Chromosome"/>
</dbReference>
<dbReference type="GO" id="GO:0005737">
    <property type="term" value="C:cytoplasm"/>
    <property type="evidence" value="ECO:0007669"/>
    <property type="project" value="UniProtKB-SubCell"/>
</dbReference>
<dbReference type="GO" id="GO:0033739">
    <property type="term" value="F:preQ1 synthase activity"/>
    <property type="evidence" value="ECO:0007669"/>
    <property type="project" value="UniProtKB-UniRule"/>
</dbReference>
<dbReference type="GO" id="GO:0008616">
    <property type="term" value="P:queuosine biosynthetic process"/>
    <property type="evidence" value="ECO:0007669"/>
    <property type="project" value="UniProtKB-UniRule"/>
</dbReference>
<dbReference type="GO" id="GO:0006400">
    <property type="term" value="P:tRNA modification"/>
    <property type="evidence" value="ECO:0007669"/>
    <property type="project" value="UniProtKB-UniRule"/>
</dbReference>
<dbReference type="Gene3D" id="3.30.1130.10">
    <property type="match status" value="1"/>
</dbReference>
<dbReference type="HAMAP" id="MF_00818">
    <property type="entry name" value="QueF_type1"/>
    <property type="match status" value="1"/>
</dbReference>
<dbReference type="InterPro" id="IPR043133">
    <property type="entry name" value="GTP-CH-I_C/QueF"/>
</dbReference>
<dbReference type="InterPro" id="IPR050084">
    <property type="entry name" value="NADPH_dep_7-cyano-7-deazaG_red"/>
</dbReference>
<dbReference type="InterPro" id="IPR029500">
    <property type="entry name" value="QueF"/>
</dbReference>
<dbReference type="InterPro" id="IPR016856">
    <property type="entry name" value="QueF_type1"/>
</dbReference>
<dbReference type="NCBIfam" id="TIGR03139">
    <property type="entry name" value="QueF-II"/>
    <property type="match status" value="1"/>
</dbReference>
<dbReference type="PANTHER" id="PTHR34354">
    <property type="entry name" value="NADPH-DEPENDENT 7-CYANO-7-DEAZAGUANINE REDUCTASE"/>
    <property type="match status" value="1"/>
</dbReference>
<dbReference type="PANTHER" id="PTHR34354:SF1">
    <property type="entry name" value="NADPH-DEPENDENT 7-CYANO-7-DEAZAGUANINE REDUCTASE"/>
    <property type="match status" value="1"/>
</dbReference>
<dbReference type="Pfam" id="PF14489">
    <property type="entry name" value="QueF"/>
    <property type="match status" value="1"/>
</dbReference>
<dbReference type="PIRSF" id="PIRSF027377">
    <property type="entry name" value="Nitrile_oxidored_QueF"/>
    <property type="match status" value="1"/>
</dbReference>
<dbReference type="SUPFAM" id="SSF55620">
    <property type="entry name" value="Tetrahydrobiopterin biosynthesis enzymes-like"/>
    <property type="match status" value="1"/>
</dbReference>
<reference key="1">
    <citation type="journal article" date="2009" name="Environ. Microbiol.">
        <title>Contribution of mobile genetic elements to Desulfovibrio vulgaris genome plasticity.</title>
        <authorList>
            <person name="Walker C.B."/>
            <person name="Stolyar S."/>
            <person name="Chivian D."/>
            <person name="Pinel N."/>
            <person name="Gabster J.A."/>
            <person name="Dehal P.S."/>
            <person name="He Z."/>
            <person name="Yang Z.K."/>
            <person name="Yen H.C."/>
            <person name="Zhou J."/>
            <person name="Wall J.D."/>
            <person name="Hazen T.C."/>
            <person name="Arkin A.P."/>
            <person name="Stahl D.A."/>
        </authorList>
    </citation>
    <scope>NUCLEOTIDE SEQUENCE [LARGE SCALE GENOMIC DNA]</scope>
    <source>
        <strain>DP4</strain>
    </source>
</reference>
<keyword id="KW-0963">Cytoplasm</keyword>
<keyword id="KW-0521">NADP</keyword>
<keyword id="KW-0560">Oxidoreductase</keyword>
<keyword id="KW-0671">Queuosine biosynthesis</keyword>
<proteinExistence type="inferred from homology"/>
<sequence length="165" mass="18924">MTTRSTDQTEHLRALGQKTPYPAAGPSTDLLEAFPNRFPDRPYIVSIAFPEFTSLCPVTGQPDFATIVVEYIPDQFCVESKSFKVYMFAFRDHQSFMETITNTILDDMTTKLQPLWCRVKGLFTPRGGTQLHVFAERFKEVEPARAQALRDMVSEWKRENNRHGA</sequence>
<comment type="function">
    <text evidence="1">Catalyzes the NADPH-dependent reduction of 7-cyano-7-deazaguanine (preQ0) to 7-aminomethyl-7-deazaguanine (preQ1).</text>
</comment>
<comment type="catalytic activity">
    <reaction evidence="1">
        <text>7-aminomethyl-7-carbaguanine + 2 NADP(+) = 7-cyano-7-deazaguanine + 2 NADPH + 3 H(+)</text>
        <dbReference type="Rhea" id="RHEA:13409"/>
        <dbReference type="ChEBI" id="CHEBI:15378"/>
        <dbReference type="ChEBI" id="CHEBI:45075"/>
        <dbReference type="ChEBI" id="CHEBI:57783"/>
        <dbReference type="ChEBI" id="CHEBI:58349"/>
        <dbReference type="ChEBI" id="CHEBI:58703"/>
        <dbReference type="EC" id="1.7.1.13"/>
    </reaction>
</comment>
<comment type="pathway">
    <text evidence="1">tRNA modification; tRNA-queuosine biosynthesis.</text>
</comment>
<comment type="subcellular location">
    <subcellularLocation>
        <location evidence="1">Cytoplasm</location>
    </subcellularLocation>
</comment>
<comment type="similarity">
    <text evidence="1">Belongs to the GTP cyclohydrolase I family. QueF type 1 subfamily.</text>
</comment>
<feature type="chain" id="PRO_1000062383" description="NADPH-dependent 7-cyano-7-deazaguanine reductase">
    <location>
        <begin position="1"/>
        <end position="165"/>
    </location>
</feature>
<feature type="region of interest" description="Disordered" evidence="2">
    <location>
        <begin position="1"/>
        <end position="24"/>
    </location>
</feature>
<feature type="active site" description="Thioimide intermediate" evidence="1">
    <location>
        <position position="56"/>
    </location>
</feature>
<feature type="active site" description="Proton donor" evidence="1">
    <location>
        <position position="63"/>
    </location>
</feature>
<feature type="binding site" evidence="1">
    <location>
        <begin position="78"/>
        <end position="80"/>
    </location>
    <ligand>
        <name>substrate</name>
    </ligand>
</feature>
<feature type="binding site" evidence="1">
    <location>
        <begin position="97"/>
        <end position="98"/>
    </location>
    <ligand>
        <name>substrate</name>
    </ligand>
</feature>
<gene>
    <name evidence="1" type="primary">queF</name>
    <name type="ordered locus">Dvul_2025</name>
</gene>
<accession>A1VF25</accession>